<accession>Q1C857</accession>
<reference key="1">
    <citation type="journal article" date="2006" name="J. Bacteriol.">
        <title>Complete genome sequence of Yersinia pestis strains Antiqua and Nepal516: evidence of gene reduction in an emerging pathogen.</title>
        <authorList>
            <person name="Chain P.S.G."/>
            <person name="Hu P."/>
            <person name="Malfatti S.A."/>
            <person name="Radnedge L."/>
            <person name="Larimer F."/>
            <person name="Vergez L.M."/>
            <person name="Worsham P."/>
            <person name="Chu M.C."/>
            <person name="Andersen G.L."/>
        </authorList>
    </citation>
    <scope>NUCLEOTIDE SEQUENCE [LARGE SCALE GENOMIC DNA]</scope>
    <source>
        <strain>Antiqua</strain>
    </source>
</reference>
<protein>
    <recommendedName>
        <fullName evidence="1">4-diphosphocytidyl-2-C-methyl-D-erythritol kinase</fullName>
        <shortName evidence="1">CMK</shortName>
        <ecNumber evidence="1">2.7.1.148</ecNumber>
    </recommendedName>
    <alternativeName>
        <fullName evidence="1">4-(cytidine-5'-diphospho)-2-C-methyl-D-erythritol kinase</fullName>
    </alternativeName>
</protein>
<name>ISPE_YERPA</name>
<keyword id="KW-0067">ATP-binding</keyword>
<keyword id="KW-0414">Isoprene biosynthesis</keyword>
<keyword id="KW-0418">Kinase</keyword>
<keyword id="KW-0547">Nucleotide-binding</keyword>
<keyword id="KW-0808">Transferase</keyword>
<evidence type="ECO:0000255" key="1">
    <source>
        <dbReference type="HAMAP-Rule" id="MF_00061"/>
    </source>
</evidence>
<gene>
    <name evidence="1" type="primary">ispE</name>
    <name type="ordered locus">YPA_1398</name>
</gene>
<sequence length="299" mass="32675">MTTANQPICPSPAKWPSPAKLNLFLYITGQRADGYHQLQTLFQFLDYGDQLTIEPRDDNQIRLLTPIAGVENEQNLIVRAAKMLQKHPGNTPVPRGADISIDKCLPMGGGLGGGSSNAATVLVALNLLWQCGLTDEQLADLGLTLGADVPVFVRGHAAFAEGIGEKLQPAEPVEKWYLVIHPGVNIPTPIIFSDPELKRNTPIRPLAALLSTPYANDCEPIARKRFREVEQALSWLLEYAPSRLTGTGACVFAEFDTESSARQVLSIAPEWLHGFVARGVNVSPLHRVRSGKIESSERR</sequence>
<proteinExistence type="inferred from homology"/>
<comment type="function">
    <text evidence="1">Catalyzes the phosphorylation of the position 2 hydroxy group of 4-diphosphocytidyl-2C-methyl-D-erythritol.</text>
</comment>
<comment type="catalytic activity">
    <reaction evidence="1">
        <text>4-CDP-2-C-methyl-D-erythritol + ATP = 4-CDP-2-C-methyl-D-erythritol 2-phosphate + ADP + H(+)</text>
        <dbReference type="Rhea" id="RHEA:18437"/>
        <dbReference type="ChEBI" id="CHEBI:15378"/>
        <dbReference type="ChEBI" id="CHEBI:30616"/>
        <dbReference type="ChEBI" id="CHEBI:57823"/>
        <dbReference type="ChEBI" id="CHEBI:57919"/>
        <dbReference type="ChEBI" id="CHEBI:456216"/>
        <dbReference type="EC" id="2.7.1.148"/>
    </reaction>
</comment>
<comment type="pathway">
    <text evidence="1">Isoprenoid biosynthesis; isopentenyl diphosphate biosynthesis via DXP pathway; isopentenyl diphosphate from 1-deoxy-D-xylulose 5-phosphate: step 3/6.</text>
</comment>
<comment type="subunit">
    <text evidence="1">Homodimer.</text>
</comment>
<comment type="similarity">
    <text evidence="1">Belongs to the GHMP kinase family. IspE subfamily.</text>
</comment>
<feature type="chain" id="PRO_1000007903" description="4-diphosphocytidyl-2-C-methyl-D-erythritol kinase">
    <location>
        <begin position="1"/>
        <end position="299"/>
    </location>
</feature>
<feature type="active site" evidence="1">
    <location>
        <position position="20"/>
    </location>
</feature>
<feature type="active site" evidence="1">
    <location>
        <position position="148"/>
    </location>
</feature>
<feature type="binding site" evidence="1">
    <location>
        <begin position="106"/>
        <end position="116"/>
    </location>
    <ligand>
        <name>ATP</name>
        <dbReference type="ChEBI" id="CHEBI:30616"/>
    </ligand>
</feature>
<dbReference type="EC" id="2.7.1.148" evidence="1"/>
<dbReference type="EMBL" id="CP000308">
    <property type="protein sequence ID" value="ABG13365.1"/>
    <property type="molecule type" value="Genomic_DNA"/>
</dbReference>
<dbReference type="RefSeq" id="WP_002211239.1">
    <property type="nucleotide sequence ID" value="NZ_CP009906.1"/>
</dbReference>
<dbReference type="SMR" id="Q1C857"/>
<dbReference type="GeneID" id="57976647"/>
<dbReference type="KEGG" id="ypa:YPA_1398"/>
<dbReference type="UniPathway" id="UPA00056">
    <property type="reaction ID" value="UER00094"/>
</dbReference>
<dbReference type="Proteomes" id="UP000001971">
    <property type="component" value="Chromosome"/>
</dbReference>
<dbReference type="GO" id="GO:0050515">
    <property type="term" value="F:4-(cytidine 5'-diphospho)-2-C-methyl-D-erythritol kinase activity"/>
    <property type="evidence" value="ECO:0007669"/>
    <property type="project" value="UniProtKB-UniRule"/>
</dbReference>
<dbReference type="GO" id="GO:0005524">
    <property type="term" value="F:ATP binding"/>
    <property type="evidence" value="ECO:0007669"/>
    <property type="project" value="UniProtKB-UniRule"/>
</dbReference>
<dbReference type="GO" id="GO:0019288">
    <property type="term" value="P:isopentenyl diphosphate biosynthetic process, methylerythritol 4-phosphate pathway"/>
    <property type="evidence" value="ECO:0007669"/>
    <property type="project" value="UniProtKB-UniRule"/>
</dbReference>
<dbReference type="GO" id="GO:0016114">
    <property type="term" value="P:terpenoid biosynthetic process"/>
    <property type="evidence" value="ECO:0007669"/>
    <property type="project" value="InterPro"/>
</dbReference>
<dbReference type="FunFam" id="3.30.230.10:FF:000022">
    <property type="entry name" value="4-diphosphocytidyl-2-C-methyl-D-erythritol kinase"/>
    <property type="match status" value="1"/>
</dbReference>
<dbReference type="FunFam" id="3.30.70.890:FF:000004">
    <property type="entry name" value="4-diphosphocytidyl-2-C-methyl-D-erythritol kinase"/>
    <property type="match status" value="1"/>
</dbReference>
<dbReference type="Gene3D" id="3.30.230.10">
    <property type="match status" value="1"/>
</dbReference>
<dbReference type="Gene3D" id="3.30.70.890">
    <property type="entry name" value="GHMP kinase, C-terminal domain"/>
    <property type="match status" value="1"/>
</dbReference>
<dbReference type="HAMAP" id="MF_00061">
    <property type="entry name" value="IspE"/>
    <property type="match status" value="1"/>
</dbReference>
<dbReference type="InterPro" id="IPR013750">
    <property type="entry name" value="GHMP_kinase_C_dom"/>
</dbReference>
<dbReference type="InterPro" id="IPR036554">
    <property type="entry name" value="GHMP_kinase_C_sf"/>
</dbReference>
<dbReference type="InterPro" id="IPR006204">
    <property type="entry name" value="GHMP_kinase_N_dom"/>
</dbReference>
<dbReference type="InterPro" id="IPR004424">
    <property type="entry name" value="IspE"/>
</dbReference>
<dbReference type="InterPro" id="IPR020568">
    <property type="entry name" value="Ribosomal_Su5_D2-typ_SF"/>
</dbReference>
<dbReference type="InterPro" id="IPR014721">
    <property type="entry name" value="Ribsml_uS5_D2-typ_fold_subgr"/>
</dbReference>
<dbReference type="NCBIfam" id="TIGR00154">
    <property type="entry name" value="ispE"/>
    <property type="match status" value="1"/>
</dbReference>
<dbReference type="PANTHER" id="PTHR43527">
    <property type="entry name" value="4-DIPHOSPHOCYTIDYL-2-C-METHYL-D-ERYTHRITOL KINASE, CHLOROPLASTIC"/>
    <property type="match status" value="1"/>
</dbReference>
<dbReference type="PANTHER" id="PTHR43527:SF2">
    <property type="entry name" value="4-DIPHOSPHOCYTIDYL-2-C-METHYL-D-ERYTHRITOL KINASE, CHLOROPLASTIC"/>
    <property type="match status" value="1"/>
</dbReference>
<dbReference type="Pfam" id="PF08544">
    <property type="entry name" value="GHMP_kinases_C"/>
    <property type="match status" value="1"/>
</dbReference>
<dbReference type="Pfam" id="PF00288">
    <property type="entry name" value="GHMP_kinases_N"/>
    <property type="match status" value="1"/>
</dbReference>
<dbReference type="PIRSF" id="PIRSF010376">
    <property type="entry name" value="IspE"/>
    <property type="match status" value="1"/>
</dbReference>
<dbReference type="SUPFAM" id="SSF55060">
    <property type="entry name" value="GHMP Kinase, C-terminal domain"/>
    <property type="match status" value="1"/>
</dbReference>
<dbReference type="SUPFAM" id="SSF54211">
    <property type="entry name" value="Ribosomal protein S5 domain 2-like"/>
    <property type="match status" value="1"/>
</dbReference>
<organism>
    <name type="scientific">Yersinia pestis bv. Antiqua (strain Antiqua)</name>
    <dbReference type="NCBI Taxonomy" id="360102"/>
    <lineage>
        <taxon>Bacteria</taxon>
        <taxon>Pseudomonadati</taxon>
        <taxon>Pseudomonadota</taxon>
        <taxon>Gammaproteobacteria</taxon>
        <taxon>Enterobacterales</taxon>
        <taxon>Yersiniaceae</taxon>
        <taxon>Yersinia</taxon>
    </lineage>
</organism>